<organism>
    <name type="scientific">Mycobacterium sp. (strain KMS)</name>
    <dbReference type="NCBI Taxonomy" id="189918"/>
    <lineage>
        <taxon>Bacteria</taxon>
        <taxon>Bacillati</taxon>
        <taxon>Actinomycetota</taxon>
        <taxon>Actinomycetes</taxon>
        <taxon>Mycobacteriales</taxon>
        <taxon>Mycobacteriaceae</taxon>
        <taxon>Mycobacterium</taxon>
    </lineage>
</organism>
<sequence length="130" mass="14048">MAIVGVGIDLVSIPDFAEQVDRPGTVFAETFTPGERRDAADKSSSAARHLAARWAAKEAVIKAWSGSRFAKRPALPEGIHRDIEVVTDMWGRPKVRLTGDIAEHLREATIHVSLTHEGDTAAAVAVIEEP</sequence>
<dbReference type="EC" id="2.7.8.7" evidence="1"/>
<dbReference type="EMBL" id="CP000518">
    <property type="protein sequence ID" value="ABL92914.1"/>
    <property type="molecule type" value="Genomic_DNA"/>
</dbReference>
<dbReference type="SMR" id="A1UJA6"/>
<dbReference type="STRING" id="189918.Mkms_3720"/>
<dbReference type="KEGG" id="mkm:Mkms_3720"/>
<dbReference type="HOGENOM" id="CLU_089696_2_0_11"/>
<dbReference type="OrthoDB" id="517356at2"/>
<dbReference type="GO" id="GO:0005737">
    <property type="term" value="C:cytoplasm"/>
    <property type="evidence" value="ECO:0007669"/>
    <property type="project" value="UniProtKB-SubCell"/>
</dbReference>
<dbReference type="GO" id="GO:0008897">
    <property type="term" value="F:holo-[acyl-carrier-protein] synthase activity"/>
    <property type="evidence" value="ECO:0007669"/>
    <property type="project" value="UniProtKB-UniRule"/>
</dbReference>
<dbReference type="GO" id="GO:0000287">
    <property type="term" value="F:magnesium ion binding"/>
    <property type="evidence" value="ECO:0007669"/>
    <property type="project" value="UniProtKB-UniRule"/>
</dbReference>
<dbReference type="GO" id="GO:0006633">
    <property type="term" value="P:fatty acid biosynthetic process"/>
    <property type="evidence" value="ECO:0007669"/>
    <property type="project" value="UniProtKB-UniRule"/>
</dbReference>
<dbReference type="Gene3D" id="3.90.470.20">
    <property type="entry name" value="4'-phosphopantetheinyl transferase domain"/>
    <property type="match status" value="1"/>
</dbReference>
<dbReference type="HAMAP" id="MF_00101">
    <property type="entry name" value="AcpS"/>
    <property type="match status" value="1"/>
</dbReference>
<dbReference type="InterPro" id="IPR008278">
    <property type="entry name" value="4-PPantetheinyl_Trfase_dom"/>
</dbReference>
<dbReference type="InterPro" id="IPR037143">
    <property type="entry name" value="4-PPantetheinyl_Trfase_dom_sf"/>
</dbReference>
<dbReference type="InterPro" id="IPR002582">
    <property type="entry name" value="ACPS"/>
</dbReference>
<dbReference type="InterPro" id="IPR004568">
    <property type="entry name" value="Ppantetheine-prot_Trfase_dom"/>
</dbReference>
<dbReference type="NCBIfam" id="TIGR00516">
    <property type="entry name" value="acpS"/>
    <property type="match status" value="1"/>
</dbReference>
<dbReference type="NCBIfam" id="TIGR00556">
    <property type="entry name" value="pantethn_trn"/>
    <property type="match status" value="1"/>
</dbReference>
<dbReference type="NCBIfam" id="NF000831">
    <property type="entry name" value="PRK00070.3-1"/>
    <property type="match status" value="1"/>
</dbReference>
<dbReference type="Pfam" id="PF01648">
    <property type="entry name" value="ACPS"/>
    <property type="match status" value="1"/>
</dbReference>
<dbReference type="SUPFAM" id="SSF56214">
    <property type="entry name" value="4'-phosphopantetheinyl transferase"/>
    <property type="match status" value="1"/>
</dbReference>
<evidence type="ECO:0000255" key="1">
    <source>
        <dbReference type="HAMAP-Rule" id="MF_00101"/>
    </source>
</evidence>
<feature type="chain" id="PRO_1000008456" description="Holo-[acyl-carrier-protein] synthase">
    <location>
        <begin position="1"/>
        <end position="130"/>
    </location>
</feature>
<feature type="binding site" evidence="1">
    <location>
        <position position="9"/>
    </location>
    <ligand>
        <name>Mg(2+)</name>
        <dbReference type="ChEBI" id="CHEBI:18420"/>
    </ligand>
</feature>
<feature type="binding site" evidence="1">
    <location>
        <position position="58"/>
    </location>
    <ligand>
        <name>Mg(2+)</name>
        <dbReference type="ChEBI" id="CHEBI:18420"/>
    </ligand>
</feature>
<comment type="function">
    <text evidence="1">Transfers the 4'-phosphopantetheine moiety from coenzyme A to a Ser of acyl-carrier-protein.</text>
</comment>
<comment type="catalytic activity">
    <reaction evidence="1">
        <text>apo-[ACP] + CoA = holo-[ACP] + adenosine 3',5'-bisphosphate + H(+)</text>
        <dbReference type="Rhea" id="RHEA:12068"/>
        <dbReference type="Rhea" id="RHEA-COMP:9685"/>
        <dbReference type="Rhea" id="RHEA-COMP:9690"/>
        <dbReference type="ChEBI" id="CHEBI:15378"/>
        <dbReference type="ChEBI" id="CHEBI:29999"/>
        <dbReference type="ChEBI" id="CHEBI:57287"/>
        <dbReference type="ChEBI" id="CHEBI:58343"/>
        <dbReference type="ChEBI" id="CHEBI:64479"/>
        <dbReference type="EC" id="2.7.8.7"/>
    </reaction>
</comment>
<comment type="cofactor">
    <cofactor evidence="1">
        <name>Mg(2+)</name>
        <dbReference type="ChEBI" id="CHEBI:18420"/>
    </cofactor>
</comment>
<comment type="subcellular location">
    <subcellularLocation>
        <location evidence="1">Cytoplasm</location>
    </subcellularLocation>
</comment>
<comment type="similarity">
    <text evidence="1">Belongs to the P-Pant transferase superfamily. AcpS family.</text>
</comment>
<gene>
    <name evidence="1" type="primary">acpS</name>
    <name type="ordered locus">Mkms_3720</name>
</gene>
<reference key="1">
    <citation type="submission" date="2006-12" db="EMBL/GenBank/DDBJ databases">
        <title>Complete sequence of chromosome of Mycobacterium sp. KMS.</title>
        <authorList>
            <consortium name="US DOE Joint Genome Institute"/>
            <person name="Copeland A."/>
            <person name="Lucas S."/>
            <person name="Lapidus A."/>
            <person name="Barry K."/>
            <person name="Detter J.C."/>
            <person name="Glavina del Rio T."/>
            <person name="Hammon N."/>
            <person name="Israni S."/>
            <person name="Dalin E."/>
            <person name="Tice H."/>
            <person name="Pitluck S."/>
            <person name="Kiss H."/>
            <person name="Brettin T."/>
            <person name="Bruce D."/>
            <person name="Han C."/>
            <person name="Tapia R."/>
            <person name="Gilna P."/>
            <person name="Schmutz J."/>
            <person name="Larimer F."/>
            <person name="Land M."/>
            <person name="Hauser L."/>
            <person name="Kyrpides N."/>
            <person name="Mikhailova N."/>
            <person name="Miller C.D."/>
            <person name="Richardson P."/>
        </authorList>
    </citation>
    <scope>NUCLEOTIDE SEQUENCE [LARGE SCALE GENOMIC DNA]</scope>
    <source>
        <strain>KMS</strain>
    </source>
</reference>
<accession>A1UJA6</accession>
<proteinExistence type="inferred from homology"/>
<protein>
    <recommendedName>
        <fullName evidence="1">Holo-[acyl-carrier-protein] synthase</fullName>
        <shortName evidence="1">Holo-ACP synthase</shortName>
        <ecNumber evidence="1">2.7.8.7</ecNumber>
    </recommendedName>
    <alternativeName>
        <fullName evidence="1">4'-phosphopantetheinyl transferase AcpS</fullName>
    </alternativeName>
</protein>
<name>ACPS_MYCSK</name>
<keyword id="KW-0963">Cytoplasm</keyword>
<keyword id="KW-0275">Fatty acid biosynthesis</keyword>
<keyword id="KW-0276">Fatty acid metabolism</keyword>
<keyword id="KW-0444">Lipid biosynthesis</keyword>
<keyword id="KW-0443">Lipid metabolism</keyword>
<keyword id="KW-0460">Magnesium</keyword>
<keyword id="KW-0479">Metal-binding</keyword>
<keyword id="KW-0808">Transferase</keyword>